<keyword id="KW-0012">Acyltransferase</keyword>
<keyword id="KW-0997">Cell inner membrane</keyword>
<keyword id="KW-1003">Cell membrane</keyword>
<keyword id="KW-0472">Membrane</keyword>
<keyword id="KW-1185">Reference proteome</keyword>
<keyword id="KW-0808">Transferase</keyword>
<keyword id="KW-0812">Transmembrane</keyword>
<keyword id="KW-1133">Transmembrane helix</keyword>
<protein>
    <recommendedName>
        <fullName evidence="1">Apolipoprotein N-acyltransferase</fullName>
        <shortName evidence="1">ALP N-acyltransferase</shortName>
        <ecNumber evidence="1">2.3.1.269</ecNumber>
    </recommendedName>
</protein>
<accession>Q8Y210</accession>
<reference key="1">
    <citation type="journal article" date="2002" name="Nature">
        <title>Genome sequence of the plant pathogen Ralstonia solanacearum.</title>
        <authorList>
            <person name="Salanoubat M."/>
            <person name="Genin S."/>
            <person name="Artiguenave F."/>
            <person name="Gouzy J."/>
            <person name="Mangenot S."/>
            <person name="Arlat M."/>
            <person name="Billault A."/>
            <person name="Brottier P."/>
            <person name="Camus J.-C."/>
            <person name="Cattolico L."/>
            <person name="Chandler M."/>
            <person name="Choisne N."/>
            <person name="Claudel-Renard C."/>
            <person name="Cunnac S."/>
            <person name="Demange N."/>
            <person name="Gaspin C."/>
            <person name="Lavie M."/>
            <person name="Moisan A."/>
            <person name="Robert C."/>
            <person name="Saurin W."/>
            <person name="Schiex T."/>
            <person name="Siguier P."/>
            <person name="Thebault P."/>
            <person name="Whalen M."/>
            <person name="Wincker P."/>
            <person name="Levy M."/>
            <person name="Weissenbach J."/>
            <person name="Boucher C.A."/>
        </authorList>
    </citation>
    <scope>NUCLEOTIDE SEQUENCE [LARGE SCALE GENOMIC DNA]</scope>
    <source>
        <strain>ATCC BAA-1114 / GMI1000</strain>
    </source>
</reference>
<evidence type="ECO:0000255" key="1">
    <source>
        <dbReference type="HAMAP-Rule" id="MF_01148"/>
    </source>
</evidence>
<dbReference type="EC" id="2.3.1.269" evidence="1"/>
<dbReference type="EMBL" id="AL646052">
    <property type="protein sequence ID" value="CAD14055.1"/>
    <property type="molecule type" value="Genomic_DNA"/>
</dbReference>
<dbReference type="SMR" id="Q8Y210"/>
<dbReference type="STRING" id="267608.RSc0527"/>
<dbReference type="EnsemblBacteria" id="CAD14055">
    <property type="protein sequence ID" value="CAD14055"/>
    <property type="gene ID" value="RSc0527"/>
</dbReference>
<dbReference type="KEGG" id="rso:RSc0527"/>
<dbReference type="eggNOG" id="COG0815">
    <property type="taxonomic scope" value="Bacteria"/>
</dbReference>
<dbReference type="HOGENOM" id="CLU_019563_3_0_4"/>
<dbReference type="UniPathway" id="UPA00666"/>
<dbReference type="Proteomes" id="UP000001436">
    <property type="component" value="Chromosome"/>
</dbReference>
<dbReference type="GO" id="GO:0005886">
    <property type="term" value="C:plasma membrane"/>
    <property type="evidence" value="ECO:0007669"/>
    <property type="project" value="UniProtKB-SubCell"/>
</dbReference>
<dbReference type="GO" id="GO:0016410">
    <property type="term" value="F:N-acyltransferase activity"/>
    <property type="evidence" value="ECO:0007669"/>
    <property type="project" value="UniProtKB-UniRule"/>
</dbReference>
<dbReference type="GO" id="GO:0042158">
    <property type="term" value="P:lipoprotein biosynthetic process"/>
    <property type="evidence" value="ECO:0007669"/>
    <property type="project" value="UniProtKB-UniRule"/>
</dbReference>
<dbReference type="CDD" id="cd07571">
    <property type="entry name" value="ALP_N-acyl_transferase"/>
    <property type="match status" value="1"/>
</dbReference>
<dbReference type="Gene3D" id="3.60.110.10">
    <property type="entry name" value="Carbon-nitrogen hydrolase"/>
    <property type="match status" value="1"/>
</dbReference>
<dbReference type="HAMAP" id="MF_01148">
    <property type="entry name" value="Lnt"/>
    <property type="match status" value="1"/>
</dbReference>
<dbReference type="InterPro" id="IPR004563">
    <property type="entry name" value="Apolipo_AcylTrfase"/>
</dbReference>
<dbReference type="InterPro" id="IPR003010">
    <property type="entry name" value="C-N_Hydrolase"/>
</dbReference>
<dbReference type="InterPro" id="IPR036526">
    <property type="entry name" value="C-N_Hydrolase_sf"/>
</dbReference>
<dbReference type="InterPro" id="IPR045378">
    <property type="entry name" value="LNT_N"/>
</dbReference>
<dbReference type="NCBIfam" id="TIGR00546">
    <property type="entry name" value="lnt"/>
    <property type="match status" value="1"/>
</dbReference>
<dbReference type="PANTHER" id="PTHR38686">
    <property type="entry name" value="APOLIPOPROTEIN N-ACYLTRANSFERASE"/>
    <property type="match status" value="1"/>
</dbReference>
<dbReference type="PANTHER" id="PTHR38686:SF1">
    <property type="entry name" value="APOLIPOPROTEIN N-ACYLTRANSFERASE"/>
    <property type="match status" value="1"/>
</dbReference>
<dbReference type="Pfam" id="PF00795">
    <property type="entry name" value="CN_hydrolase"/>
    <property type="match status" value="1"/>
</dbReference>
<dbReference type="Pfam" id="PF20154">
    <property type="entry name" value="LNT_N"/>
    <property type="match status" value="1"/>
</dbReference>
<dbReference type="SUPFAM" id="SSF56317">
    <property type="entry name" value="Carbon-nitrogen hydrolase"/>
    <property type="match status" value="1"/>
</dbReference>
<dbReference type="PROSITE" id="PS50263">
    <property type="entry name" value="CN_HYDROLASE"/>
    <property type="match status" value="1"/>
</dbReference>
<comment type="function">
    <text evidence="1">Catalyzes the phospholipid dependent N-acylation of the N-terminal cysteine of apolipoprotein, the last step in lipoprotein maturation.</text>
</comment>
<comment type="catalytic activity">
    <reaction evidence="1">
        <text>N-terminal S-1,2-diacyl-sn-glyceryl-L-cysteinyl-[lipoprotein] + a glycerophospholipid = N-acyl-S-1,2-diacyl-sn-glyceryl-L-cysteinyl-[lipoprotein] + a 2-acyl-sn-glycero-3-phospholipid + H(+)</text>
        <dbReference type="Rhea" id="RHEA:48228"/>
        <dbReference type="Rhea" id="RHEA-COMP:14681"/>
        <dbReference type="Rhea" id="RHEA-COMP:14684"/>
        <dbReference type="ChEBI" id="CHEBI:15378"/>
        <dbReference type="ChEBI" id="CHEBI:136912"/>
        <dbReference type="ChEBI" id="CHEBI:140656"/>
        <dbReference type="ChEBI" id="CHEBI:140657"/>
        <dbReference type="ChEBI" id="CHEBI:140660"/>
        <dbReference type="EC" id="2.3.1.269"/>
    </reaction>
</comment>
<comment type="pathway">
    <text evidence="1">Protein modification; lipoprotein biosynthesis (N-acyl transfer).</text>
</comment>
<comment type="subcellular location">
    <subcellularLocation>
        <location evidence="1">Cell inner membrane</location>
        <topology evidence="1">Multi-pass membrane protein</topology>
    </subcellularLocation>
</comment>
<comment type="similarity">
    <text evidence="1">Belongs to the CN hydrolase family. Apolipoprotein N-acyltransferase subfamily.</text>
</comment>
<sequence>MRALFSSPAADTAGQQEALAVPLARLRFAAPLAALLGVMHTLAFAPNRWWWLQILSLAGLAALVRQAPRLRDVAWVGYAFGLGWFLSGIWWLYISMHVYGDMPAWMAAAAVLLFSAYLALHPALAAWLWQRLARGRQLSGAASALVFGAAWLVSEWLRGTEWTGFPWLNGGYAHTDGPLAGYAPLVGVYGVVAIAATLAGLLCAAAERRLHWLAGLAGVAVLAAGWPLHTIAWTQPVGKPITVRLLQGNVPQDVKFQQTGIDHSLALYTKMVTEQPAQLVVTPETAFPILLQDMPQEIALAIRTYVDTTGSSVLFGAANADSAVDYTNSAFGVGPWFKGVYRYDKHHLVPFGEFIPFGFHWFVHMMNMPLGDFRRGLPVQPPMPVAGQRVAPNICYEDLFGEEIAASLRQAERPATMLANVTNLAWFGDTIALDQHLQISRMRALESGRPMLRATNTGATAVVRPDGSVQARLPVFTLGTLQADVQGMQGLTPFVRTGNAPALGAGVLVLLAALARRRRAGAA</sequence>
<name>LNT_RALN1</name>
<proteinExistence type="inferred from homology"/>
<organism>
    <name type="scientific">Ralstonia nicotianae (strain ATCC BAA-1114 / GMI1000)</name>
    <name type="common">Ralstonia solanacearum</name>
    <dbReference type="NCBI Taxonomy" id="267608"/>
    <lineage>
        <taxon>Bacteria</taxon>
        <taxon>Pseudomonadati</taxon>
        <taxon>Pseudomonadota</taxon>
        <taxon>Betaproteobacteria</taxon>
        <taxon>Burkholderiales</taxon>
        <taxon>Burkholderiaceae</taxon>
        <taxon>Ralstonia</taxon>
        <taxon>Ralstonia solanacearum species complex</taxon>
    </lineage>
</organism>
<feature type="chain" id="PRO_0000178087" description="Apolipoprotein N-acyltransferase">
    <location>
        <begin position="1"/>
        <end position="523"/>
    </location>
</feature>
<feature type="transmembrane region" description="Helical" evidence="1">
    <location>
        <begin position="26"/>
        <end position="46"/>
    </location>
</feature>
<feature type="transmembrane region" description="Helical" evidence="1">
    <location>
        <begin position="49"/>
        <end position="66"/>
    </location>
</feature>
<feature type="transmembrane region" description="Helical" evidence="1">
    <location>
        <begin position="74"/>
        <end position="94"/>
    </location>
</feature>
<feature type="transmembrane region" description="Helical" evidence="1">
    <location>
        <begin position="109"/>
        <end position="129"/>
    </location>
</feature>
<feature type="transmembrane region" description="Helical" evidence="1">
    <location>
        <begin position="137"/>
        <end position="157"/>
    </location>
</feature>
<feature type="transmembrane region" description="Helical" evidence="1">
    <location>
        <begin position="185"/>
        <end position="205"/>
    </location>
</feature>
<feature type="transmembrane region" description="Helical" evidence="1">
    <location>
        <begin position="212"/>
        <end position="232"/>
    </location>
</feature>
<feature type="transmembrane region" description="Helical" evidence="1">
    <location>
        <begin position="494"/>
        <end position="514"/>
    </location>
</feature>
<feature type="domain" description="CN hydrolase" evidence="1">
    <location>
        <begin position="246"/>
        <end position="487"/>
    </location>
</feature>
<feature type="active site" description="Proton acceptor" evidence="1">
    <location>
        <position position="284"/>
    </location>
</feature>
<feature type="active site" evidence="1">
    <location>
        <position position="345"/>
    </location>
</feature>
<feature type="active site" description="Nucleophile" evidence="1">
    <location>
        <position position="395"/>
    </location>
</feature>
<gene>
    <name evidence="1" type="primary">lnt</name>
    <name type="ordered locus">RSc0527</name>
    <name type="ORF">RS04941</name>
</gene>